<evidence type="ECO:0000255" key="1"/>
<evidence type="ECO:0000255" key="2">
    <source>
        <dbReference type="PROSITE-ProRule" id="PRU00631"/>
    </source>
</evidence>
<evidence type="ECO:0000256" key="3">
    <source>
        <dbReference type="SAM" id="MobiDB-lite"/>
    </source>
</evidence>
<sequence>MKVQKSSKKPLKRSASFTNGTKSGSKSMKSSKSSLKSHKKIYKEIFDSEISDNESFDSEISDSESSDNESSDNESSDNESSVESSDEESEYEIKKPRRIPSQYSKKFTDNVLDDESDDDNQSDNESSDINSDDDNNLNELKNNVIEVNKSLSKNIISNGDITDIRNIIYEKIDKEISKGIYGTFNVLIMIHNGYINVTKVIQYVTTKKKKFNDWKSTKQAQELIEEVSSVTGIPVAGLFIAKNTGSKKITEIRGTYAHPDLVPHIVSWASAKFGHKVSKIVNDYMSKKMFDKHEQLIKGKDDKIAELTRKIDKQTSLMKDQKSTIKEQDKKINELLSKSNEVLGYAKDTNRKITHVVKERVPYSDEPKIEHQLIIMKNNDEPIKPKKGEKAKKIYGYTALRIMNKSKSATMNRYYKDHPDGETVLTIDYTPNAMHLWNQCKMELIEDEKIRPGGTSCSSFNLRKEYSERKLKKDIKRIHNLRLKHPE</sequence>
<reference key="1">
    <citation type="journal article" date="2004" name="Science">
        <title>The 1.2-megabase genome sequence of Mimivirus.</title>
        <authorList>
            <person name="Raoult D."/>
            <person name="Audic S."/>
            <person name="Robert C."/>
            <person name="Abergel C."/>
            <person name="Renesto P."/>
            <person name="Ogata H."/>
            <person name="La Scola B."/>
            <person name="Susan M."/>
            <person name="Claverie J.-M."/>
        </authorList>
    </citation>
    <scope>NUCLEOTIDE SEQUENCE [LARGE SCALE GENOMIC DNA]</scope>
    <source>
        <strain>Rowbotham-Bradford</strain>
    </source>
</reference>
<keyword id="KW-0175">Coiled coil</keyword>
<keyword id="KW-1185">Reference proteome</keyword>
<dbReference type="EMBL" id="AY653733">
    <property type="protein sequence ID" value="AAV50312.1"/>
    <property type="molecule type" value="Genomic_DNA"/>
</dbReference>
<dbReference type="SMR" id="Q5UPB3"/>
<dbReference type="KEGG" id="vg:9924618"/>
<dbReference type="OrthoDB" id="13159at10239"/>
<dbReference type="Proteomes" id="UP000001134">
    <property type="component" value="Genome"/>
</dbReference>
<dbReference type="InterPro" id="IPR022549">
    <property type="entry name" value="DUF3627"/>
</dbReference>
<dbReference type="InterPro" id="IPR018004">
    <property type="entry name" value="KilA/APSES_HTH"/>
</dbReference>
<dbReference type="InterPro" id="IPR017880">
    <property type="entry name" value="KilA_N"/>
</dbReference>
<dbReference type="Pfam" id="PF12299">
    <property type="entry name" value="DUF3627"/>
    <property type="match status" value="1"/>
</dbReference>
<dbReference type="Pfam" id="PF04383">
    <property type="entry name" value="KilA-N"/>
    <property type="match status" value="1"/>
</dbReference>
<dbReference type="SMART" id="SM01252">
    <property type="entry name" value="KilA-N"/>
    <property type="match status" value="1"/>
</dbReference>
<dbReference type="PROSITE" id="PS51301">
    <property type="entry name" value="KILA_N"/>
    <property type="match status" value="1"/>
</dbReference>
<organism>
    <name type="scientific">Acanthamoeba polyphaga mimivirus</name>
    <name type="common">APMV</name>
    <dbReference type="NCBI Taxonomy" id="212035"/>
    <lineage>
        <taxon>Viruses</taxon>
        <taxon>Varidnaviria</taxon>
        <taxon>Bamfordvirae</taxon>
        <taxon>Nucleocytoviricota</taxon>
        <taxon>Megaviricetes</taxon>
        <taxon>Imitervirales</taxon>
        <taxon>Mimiviridae</taxon>
        <taxon>Megamimivirinae</taxon>
        <taxon>Mimivirus</taxon>
        <taxon>Mimivirus bradfordmassiliense</taxon>
    </lineage>
</organism>
<name>YL037_MIMIV</name>
<protein>
    <recommendedName>
        <fullName>Putative KilA-N domain-containing protein L37</fullName>
    </recommendedName>
</protein>
<feature type="chain" id="PRO_0000247418" description="Putative KilA-N domain-containing protein L37">
    <location>
        <begin position="1"/>
        <end position="487"/>
    </location>
</feature>
<feature type="domain" description="KilA-N" evidence="2">
    <location>
        <begin position="175"/>
        <end position="284"/>
    </location>
</feature>
<feature type="region of interest" description="Disordered" evidence="3">
    <location>
        <begin position="1"/>
        <end position="137"/>
    </location>
</feature>
<feature type="coiled-coil region" evidence="1">
    <location>
        <begin position="290"/>
        <end position="338"/>
    </location>
</feature>
<feature type="compositionally biased region" description="Basic residues" evidence="3">
    <location>
        <begin position="1"/>
        <end position="12"/>
    </location>
</feature>
<feature type="compositionally biased region" description="Low complexity" evidence="3">
    <location>
        <begin position="22"/>
        <end position="34"/>
    </location>
</feature>
<feature type="compositionally biased region" description="Acidic residues" evidence="3">
    <location>
        <begin position="47"/>
        <end position="77"/>
    </location>
</feature>
<feature type="compositionally biased region" description="Acidic residues" evidence="3">
    <location>
        <begin position="111"/>
        <end position="136"/>
    </location>
</feature>
<gene>
    <name type="ordered locus">MIMI_L37</name>
</gene>
<proteinExistence type="predicted"/>
<organismHost>
    <name type="scientific">Acanthamoeba polyphaga</name>
    <name type="common">Amoeba</name>
    <dbReference type="NCBI Taxonomy" id="5757"/>
</organismHost>
<accession>Q5UPB3</accession>